<protein>
    <recommendedName>
        <fullName>Histone deacetylase complex subunit SAP30L</fullName>
    </recommendedName>
    <alternativeName>
        <fullName>Sin3 corepressor complex subunit SAP30L</fullName>
    </alternativeName>
    <alternativeName>
        <fullName>Sin3-associated protein p30-like</fullName>
    </alternativeName>
</protein>
<organism>
    <name type="scientific">Danio rerio</name>
    <name type="common">Zebrafish</name>
    <name type="synonym">Brachydanio rerio</name>
    <dbReference type="NCBI Taxonomy" id="7955"/>
    <lineage>
        <taxon>Eukaryota</taxon>
        <taxon>Metazoa</taxon>
        <taxon>Chordata</taxon>
        <taxon>Craniata</taxon>
        <taxon>Vertebrata</taxon>
        <taxon>Euteleostomi</taxon>
        <taxon>Actinopterygii</taxon>
        <taxon>Neopterygii</taxon>
        <taxon>Teleostei</taxon>
        <taxon>Ostariophysi</taxon>
        <taxon>Cypriniformes</taxon>
        <taxon>Danionidae</taxon>
        <taxon>Danioninae</taxon>
        <taxon>Danio</taxon>
    </lineage>
</organism>
<feature type="chain" id="PRO_0000309502" description="Histone deacetylase complex subunit SAP30L">
    <location>
        <begin position="1"/>
        <end position="178"/>
    </location>
</feature>
<feature type="zinc finger region" description="Atypical">
    <location>
        <begin position="24"/>
        <end position="72"/>
    </location>
</feature>
<feature type="region of interest" description="Disordered" evidence="3">
    <location>
        <begin position="80"/>
        <end position="99"/>
    </location>
</feature>
<feature type="region of interest" description="Important for DNA and phosphoinositide binding" evidence="1">
    <location>
        <begin position="83"/>
        <end position="85"/>
    </location>
</feature>
<feature type="short sequence motif" description="Nuclear localization signal (NLS)" evidence="1">
    <location>
        <begin position="81"/>
        <end position="86"/>
    </location>
</feature>
<feature type="disulfide bond" description="Redox-active" evidence="2">
    <location>
        <begin position="24"/>
        <end position="25"/>
    </location>
</feature>
<feature type="disulfide bond" description="Redox-active" evidence="2">
    <location>
        <begin position="33"/>
        <end position="69"/>
    </location>
</feature>
<reference key="1">
    <citation type="submission" date="2004-02" db="EMBL/GenBank/DDBJ databases">
        <authorList>
            <consortium name="NIH - Zebrafish Gene Collection (ZGC) project"/>
        </authorList>
    </citation>
    <scope>NUCLEOTIDE SEQUENCE [LARGE SCALE MRNA]</scope>
    <source>
        <tissue>Embryo</tissue>
    </source>
</reference>
<reference key="2">
    <citation type="journal article" date="2012" name="J. Cell. Biochem.">
        <title>SAP30L (Sin3A-associated protein 30-like) is involved in regulation of cardiac development and hematopoiesis in zebrafish embryos.</title>
        <authorList>
            <person name="Teittinen K.J."/>
            <person name="Groenroos T."/>
            <person name="Parikka M."/>
            <person name="Junttila S."/>
            <person name="Uusimaeki A."/>
            <person name="Laiho A."/>
            <person name="Korkeamaeki H."/>
            <person name="Kurppa K."/>
            <person name="Turpeinen H."/>
            <person name="Pesu M."/>
            <person name="Gyenesei A."/>
            <person name="Raemet M."/>
            <person name="Lohi O."/>
        </authorList>
    </citation>
    <scope>FUNCTION</scope>
    <scope>DISRUPTION PHENOTYPE</scope>
    <scope>TISSUE SPECIFICITY</scope>
</reference>
<gene>
    <name type="primary">sap30l</name>
</gene>
<keyword id="KW-1015">Disulfide bond</keyword>
<keyword id="KW-0238">DNA-binding</keyword>
<keyword id="KW-0446">Lipid-binding</keyword>
<keyword id="KW-0479">Metal-binding</keyword>
<keyword id="KW-0539">Nucleus</keyword>
<keyword id="KW-1185">Reference proteome</keyword>
<keyword id="KW-0678">Repressor</keyword>
<keyword id="KW-0804">Transcription</keyword>
<keyword id="KW-0805">Transcription regulation</keyword>
<keyword id="KW-0862">Zinc</keyword>
<keyword id="KW-0863">Zinc-finger</keyword>
<sequence>MNGFSTEEDSHDGPPAPPFFGQSCCLIEDAERCGRPAGNASFSKRIQKSISQRKLKLDIDKSVRHLYICDFHKNFIQSVRNKRKRKTSDDGGESPDHEVEVPEVDLFQLQVNTLRRYKRHYKIQTRPGLNKAQLAETVSRHFRNIPVNEKETLTYFIYMVKSSKSRLDQKSDSSKQVE</sequence>
<name>SP30L_DANRE</name>
<dbReference type="EMBL" id="BC066447">
    <property type="protein sequence ID" value="AAH66447.1"/>
    <property type="molecule type" value="mRNA"/>
</dbReference>
<dbReference type="RefSeq" id="NP_999868.1">
    <property type="nucleotide sequence ID" value="NM_214703.1"/>
</dbReference>
<dbReference type="SMR" id="Q6NYV5"/>
<dbReference type="FunCoup" id="Q6NYV5">
    <property type="interactions" value="1726"/>
</dbReference>
<dbReference type="STRING" id="7955.ENSDARP00000028875"/>
<dbReference type="PaxDb" id="7955-ENSDARP00000028875"/>
<dbReference type="Ensembl" id="ENSDART00000029763">
    <property type="protein sequence ID" value="ENSDARP00000028875"/>
    <property type="gene ID" value="ENSDARG00000030213"/>
</dbReference>
<dbReference type="GeneID" id="327079"/>
<dbReference type="KEGG" id="dre:327079"/>
<dbReference type="AGR" id="ZFIN:ZDB-GENE-030131-5287"/>
<dbReference type="CTD" id="79685"/>
<dbReference type="ZFIN" id="ZDB-GENE-030131-5287">
    <property type="gene designation" value="sap30l"/>
</dbReference>
<dbReference type="eggNOG" id="ENOG502QWFH">
    <property type="taxonomic scope" value="Eukaryota"/>
</dbReference>
<dbReference type="HOGENOM" id="CLU_097961_1_0_1"/>
<dbReference type="InParanoid" id="Q6NYV5"/>
<dbReference type="OMA" id="SDQICCL"/>
<dbReference type="OrthoDB" id="510958at2759"/>
<dbReference type="PhylomeDB" id="Q6NYV5"/>
<dbReference type="TreeFam" id="TF324135"/>
<dbReference type="PRO" id="PR:Q6NYV5"/>
<dbReference type="Proteomes" id="UP000000437">
    <property type="component" value="Chromosome 21"/>
</dbReference>
<dbReference type="Bgee" id="ENSDARG00000030213">
    <property type="expression patterns" value="Expressed in muscle tissue and 36 other cell types or tissues"/>
</dbReference>
<dbReference type="GO" id="GO:0000118">
    <property type="term" value="C:histone deacetylase complex"/>
    <property type="evidence" value="ECO:0000250"/>
    <property type="project" value="UniProtKB"/>
</dbReference>
<dbReference type="GO" id="GO:0005730">
    <property type="term" value="C:nucleolus"/>
    <property type="evidence" value="ECO:0000250"/>
    <property type="project" value="UniProtKB"/>
</dbReference>
<dbReference type="GO" id="GO:0003677">
    <property type="term" value="F:DNA binding"/>
    <property type="evidence" value="ECO:0000250"/>
    <property type="project" value="UniProtKB"/>
</dbReference>
<dbReference type="GO" id="GO:0042393">
    <property type="term" value="F:histone binding"/>
    <property type="evidence" value="ECO:0000250"/>
    <property type="project" value="UniProtKB"/>
</dbReference>
<dbReference type="GO" id="GO:0044378">
    <property type="term" value="F:non-sequence-specific DNA binding, bending"/>
    <property type="evidence" value="ECO:0000250"/>
    <property type="project" value="UniProtKB"/>
</dbReference>
<dbReference type="GO" id="GO:0031491">
    <property type="term" value="F:nucleosome binding"/>
    <property type="evidence" value="ECO:0000250"/>
    <property type="project" value="UniProtKB"/>
</dbReference>
<dbReference type="GO" id="GO:0032266">
    <property type="term" value="F:phosphatidylinositol-3-phosphate binding"/>
    <property type="evidence" value="ECO:0000250"/>
    <property type="project" value="UniProtKB"/>
</dbReference>
<dbReference type="GO" id="GO:0070273">
    <property type="term" value="F:phosphatidylinositol-4-phosphate binding"/>
    <property type="evidence" value="ECO:0000250"/>
    <property type="project" value="UniProtKB"/>
</dbReference>
<dbReference type="GO" id="GO:0010314">
    <property type="term" value="F:phosphatidylinositol-5-phosphate binding"/>
    <property type="evidence" value="ECO:0000250"/>
    <property type="project" value="UniProtKB"/>
</dbReference>
<dbReference type="GO" id="GO:0003712">
    <property type="term" value="F:transcription coregulator activity"/>
    <property type="evidence" value="ECO:0000318"/>
    <property type="project" value="GO_Central"/>
</dbReference>
<dbReference type="GO" id="GO:0008270">
    <property type="term" value="F:zinc ion binding"/>
    <property type="evidence" value="ECO:0000250"/>
    <property type="project" value="UniProtKB"/>
</dbReference>
<dbReference type="GO" id="GO:0001947">
    <property type="term" value="P:heart looping"/>
    <property type="evidence" value="ECO:0000315"/>
    <property type="project" value="ZFIN"/>
</dbReference>
<dbReference type="GO" id="GO:0000122">
    <property type="term" value="P:negative regulation of transcription by RNA polymerase II"/>
    <property type="evidence" value="ECO:0000250"/>
    <property type="project" value="UniProtKB"/>
</dbReference>
<dbReference type="GO" id="GO:0006355">
    <property type="term" value="P:regulation of DNA-templated transcription"/>
    <property type="evidence" value="ECO:0000318"/>
    <property type="project" value="GO_Central"/>
</dbReference>
<dbReference type="FunFam" id="3.40.1800.30:FF:000001">
    <property type="entry name" value="Histone deacetylase complex subunit"/>
    <property type="match status" value="1"/>
</dbReference>
<dbReference type="Gene3D" id="3.40.1800.30">
    <property type="match status" value="1"/>
</dbReference>
<dbReference type="Gene3D" id="6.10.160.20">
    <property type="match status" value="1"/>
</dbReference>
<dbReference type="InterPro" id="IPR024145">
    <property type="entry name" value="His_deAcase_SAP30/SAP30L"/>
</dbReference>
<dbReference type="InterPro" id="IPR038291">
    <property type="entry name" value="SAP30_C_sf"/>
</dbReference>
<dbReference type="InterPro" id="IPR025718">
    <property type="entry name" value="SAP30_Sin3-bd"/>
</dbReference>
<dbReference type="InterPro" id="IPR025717">
    <property type="entry name" value="SAP30_zn-finger"/>
</dbReference>
<dbReference type="PANTHER" id="PTHR13286:SF6">
    <property type="entry name" value="HISTONE DEACETYLASE COMPLEX SUBUNIT SAP30L-RELATED"/>
    <property type="match status" value="1"/>
</dbReference>
<dbReference type="PANTHER" id="PTHR13286">
    <property type="entry name" value="SAP30"/>
    <property type="match status" value="1"/>
</dbReference>
<dbReference type="Pfam" id="PF13867">
    <property type="entry name" value="SAP30_Sin3_bdg"/>
    <property type="match status" value="1"/>
</dbReference>
<dbReference type="Pfam" id="PF13866">
    <property type="entry name" value="zf-SAP30"/>
    <property type="match status" value="1"/>
</dbReference>
<accession>Q6NYV5</accession>
<proteinExistence type="evidence at protein level"/>
<comment type="function">
    <text evidence="1 4">Functions as a transcription repressor, probably via its interaction with histone deacetylase complexes (PubMed:22821512). Required for normal expression of numerous target genes (PubMed:22821512). Involved in the functional recruitment of the class 1 Sin3-histone deacetylase complex (HDAC) to the nucleolus. Binds DNA, apparently without sequence-specificity, and bends bound double-stranded DNA. Binds phosphoinositol phosphates (phosphoinositol 3-phosphate, phosphoinositol 4-phosphate and phosphoinositol 5-phosphate) via the same basic sequence motif that mediates DNA binding and nuclear import (By similarity).</text>
</comment>
<comment type="subunit">
    <text evidence="1">Interacts with components of the histone deacetylase complex sin3a, hdac1 and hdac2. Binds histones and nucleosomes.</text>
</comment>
<comment type="subcellular location">
    <subcellularLocation>
        <location evidence="1">Nucleus</location>
        <location evidence="1">Nucleolus</location>
    </subcellularLocation>
</comment>
<comment type="tissue specificity">
    <text evidence="4">Detected in embryos at 2dpf (at protein level). Widely expressed during embryogenesis and in adults.</text>
</comment>
<comment type="domain">
    <text evidence="1">The zinc-finger domain mediates direct interaction with DNA and phosphoinositol phosphates (phosphoinositol 3-phosphate, phosphoinositol 4-phosphate and phosphoinositol 5-phosphate). In vitro oxydation causes reversible disulfide bond formation between Cys residues in the zinc-finger domain and reversible loss of zinc ion binding.</text>
</comment>
<comment type="disruption phenotype">
    <text evidence="4">Morpholino knockdown causes defects in embryonic heart morphogenesis and pericardiac edema, with defects in heart function that are visible already at 3 dpf. In addition, erythrocytes appear pale due to decreased hemoglobin content.</text>
</comment>
<comment type="similarity">
    <text evidence="5">Belongs to the SAP30 family.</text>
</comment>
<evidence type="ECO:0000250" key="1">
    <source>
        <dbReference type="UniProtKB" id="Q9HAJ7"/>
    </source>
</evidence>
<evidence type="ECO:0000255" key="2">
    <source>
        <dbReference type="PROSITE-ProRule" id="PRU00114"/>
    </source>
</evidence>
<evidence type="ECO:0000256" key="3">
    <source>
        <dbReference type="SAM" id="MobiDB-lite"/>
    </source>
</evidence>
<evidence type="ECO:0000269" key="4">
    <source>
    </source>
</evidence>
<evidence type="ECO:0000305" key="5"/>